<name>MO25L_ARATH</name>
<feature type="chain" id="PRO_0000209831" description="MO25-like protein At2g03410">
    <location>
        <begin position="1"/>
        <end position="348"/>
    </location>
</feature>
<reference key="1">
    <citation type="journal article" date="1999" name="Nature">
        <title>Sequence and analysis of chromosome 2 of the plant Arabidopsis thaliana.</title>
        <authorList>
            <person name="Lin X."/>
            <person name="Kaul S."/>
            <person name="Rounsley S.D."/>
            <person name="Shea T.P."/>
            <person name="Benito M.-I."/>
            <person name="Town C.D."/>
            <person name="Fujii C.Y."/>
            <person name="Mason T.M."/>
            <person name="Bowman C.L."/>
            <person name="Barnstead M.E."/>
            <person name="Feldblyum T.V."/>
            <person name="Buell C.R."/>
            <person name="Ketchum K.A."/>
            <person name="Lee J.J."/>
            <person name="Ronning C.M."/>
            <person name="Koo H.L."/>
            <person name="Moffat K.S."/>
            <person name="Cronin L.A."/>
            <person name="Shen M."/>
            <person name="Pai G."/>
            <person name="Van Aken S."/>
            <person name="Umayam L."/>
            <person name="Tallon L.J."/>
            <person name="Gill J.E."/>
            <person name="Adams M.D."/>
            <person name="Carrera A.J."/>
            <person name="Creasy T.H."/>
            <person name="Goodman H.M."/>
            <person name="Somerville C.R."/>
            <person name="Copenhaver G.P."/>
            <person name="Preuss D."/>
            <person name="Nierman W.C."/>
            <person name="White O."/>
            <person name="Eisen J.A."/>
            <person name="Salzberg S.L."/>
            <person name="Fraser C.M."/>
            <person name="Venter J.C."/>
        </authorList>
    </citation>
    <scope>NUCLEOTIDE SEQUENCE [LARGE SCALE GENOMIC DNA]</scope>
    <source>
        <strain>cv. Columbia</strain>
    </source>
</reference>
<reference key="2">
    <citation type="journal article" date="2017" name="Plant J.">
        <title>Araport11: a complete reannotation of the Arabidopsis thaliana reference genome.</title>
        <authorList>
            <person name="Cheng C.Y."/>
            <person name="Krishnakumar V."/>
            <person name="Chan A.P."/>
            <person name="Thibaud-Nissen F."/>
            <person name="Schobel S."/>
            <person name="Town C.D."/>
        </authorList>
    </citation>
    <scope>GENOME REANNOTATION</scope>
    <source>
        <strain>cv. Columbia</strain>
    </source>
</reference>
<reference key="3">
    <citation type="submission" date="2003-12" db="EMBL/GenBank/DDBJ databases">
        <title>Arabidopsis ORF clones.</title>
        <authorList>
            <person name="Kim C.J."/>
            <person name="Chen H."/>
            <person name="Cheuk R.F."/>
            <person name="Shinn P."/>
            <person name="Carninci P."/>
            <person name="Hayashizaki Y."/>
            <person name="Ishida J."/>
            <person name="Kamiya A."/>
            <person name="Kawai J."/>
            <person name="Narusaka M."/>
            <person name="Sakurai T."/>
            <person name="Satou M."/>
            <person name="Seki M."/>
            <person name="Shinozaki K."/>
            <person name="Ecker J.R."/>
        </authorList>
    </citation>
    <scope>NUCLEOTIDE SEQUENCE [LARGE SCALE MRNA]</scope>
    <source>
        <strain>cv. Columbia</strain>
    </source>
</reference>
<reference key="4">
    <citation type="submission" date="2004-09" db="EMBL/GenBank/DDBJ databases">
        <title>Large-scale analysis of RIKEN Arabidopsis full-length (RAFL) cDNAs.</title>
        <authorList>
            <person name="Totoki Y."/>
            <person name="Seki M."/>
            <person name="Ishida J."/>
            <person name="Nakajima M."/>
            <person name="Enju A."/>
            <person name="Kamiya A."/>
            <person name="Narusaka M."/>
            <person name="Shin-i T."/>
            <person name="Nakagawa M."/>
            <person name="Sakamoto N."/>
            <person name="Oishi K."/>
            <person name="Kohara Y."/>
            <person name="Kobayashi M."/>
            <person name="Toyoda A."/>
            <person name="Sakaki Y."/>
            <person name="Sakurai T."/>
            <person name="Iida K."/>
            <person name="Akiyama K."/>
            <person name="Satou M."/>
            <person name="Toyoda T."/>
            <person name="Konagaya A."/>
            <person name="Carninci P."/>
            <person name="Kawai J."/>
            <person name="Hayashizaki Y."/>
            <person name="Shinozaki K."/>
        </authorList>
    </citation>
    <scope>NUCLEOTIDE SEQUENCE [LARGE SCALE MRNA]</scope>
    <source>
        <strain>cv. Columbia</strain>
    </source>
</reference>
<sequence length="348" mass="40000">MKGLFKNKSRLPGEIVRQTRDLIALAESEEEETDARNSKRLGICAELCRNIRDLKSILYGNGEAEPVPEACLLLTQEFFRADTLRPLIKSIPKLDLEARKDATQIVANLQKQQVEFRLVASEYLESNLDVIDSLVEGIDHDHELALHYTGMLKECVRHQVVAKYILESKNLEKFFDYVQLPYFDVATDASKIFRELLTRHKSTVAEYLAKNYEWFFAEYNTKLLEKGSYFTKRQASKLLGDVLMDRSNSGVMVKYVSSLDNLRIMMNLLREPTKNIQLEAFHIFKLFVANENKPEDIVAILVANRTKILRLFADLKPEKEDVGFETDKALVMNEIATLSLLDIKTADR</sequence>
<protein>
    <recommendedName>
        <fullName>MO25-like protein At2g03410</fullName>
    </recommendedName>
</protein>
<keyword id="KW-1185">Reference proteome</keyword>
<dbReference type="EMBL" id="AC006284">
    <property type="protein sequence ID" value="AAD17435.1"/>
    <property type="molecule type" value="Genomic_DNA"/>
</dbReference>
<dbReference type="EMBL" id="CP002685">
    <property type="protein sequence ID" value="AEC05697.1"/>
    <property type="molecule type" value="Genomic_DNA"/>
</dbReference>
<dbReference type="EMBL" id="BT010879">
    <property type="protein sequence ID" value="AAR24657.1"/>
    <property type="molecule type" value="mRNA"/>
</dbReference>
<dbReference type="EMBL" id="AK175754">
    <property type="protein sequence ID" value="BAD43517.1"/>
    <property type="molecule type" value="mRNA"/>
</dbReference>
<dbReference type="EMBL" id="AK176008">
    <property type="protein sequence ID" value="BAD43771.1"/>
    <property type="molecule type" value="mRNA"/>
</dbReference>
<dbReference type="PIR" id="B84448">
    <property type="entry name" value="B84448"/>
</dbReference>
<dbReference type="RefSeq" id="NP_178440.1">
    <property type="nucleotide sequence ID" value="NM_126392.2"/>
</dbReference>
<dbReference type="SMR" id="Q9ZQ77"/>
<dbReference type="FunCoup" id="Q9ZQ77">
    <property type="interactions" value="2896"/>
</dbReference>
<dbReference type="STRING" id="3702.Q9ZQ77"/>
<dbReference type="iPTMnet" id="Q9ZQ77"/>
<dbReference type="PaxDb" id="3702-AT2G03410.1"/>
<dbReference type="ProteomicsDB" id="238323"/>
<dbReference type="EnsemblPlants" id="AT2G03410.1">
    <property type="protein sequence ID" value="AT2G03410.1"/>
    <property type="gene ID" value="AT2G03410"/>
</dbReference>
<dbReference type="GeneID" id="814870"/>
<dbReference type="Gramene" id="AT2G03410.1">
    <property type="protein sequence ID" value="AT2G03410.1"/>
    <property type="gene ID" value="AT2G03410"/>
</dbReference>
<dbReference type="KEGG" id="ath:AT2G03410"/>
<dbReference type="Araport" id="AT2G03410"/>
<dbReference type="TAIR" id="AT2G03410"/>
<dbReference type="eggNOG" id="KOG1566">
    <property type="taxonomic scope" value="Eukaryota"/>
</dbReference>
<dbReference type="HOGENOM" id="CLU_035755_1_1_1"/>
<dbReference type="InParanoid" id="Q9ZQ77"/>
<dbReference type="OMA" id="IDHDHEL"/>
<dbReference type="PhylomeDB" id="Q9ZQ77"/>
<dbReference type="PRO" id="PR:Q9ZQ77"/>
<dbReference type="Proteomes" id="UP000006548">
    <property type="component" value="Chromosome 2"/>
</dbReference>
<dbReference type="ExpressionAtlas" id="Q9ZQ77">
    <property type="expression patterns" value="baseline and differential"/>
</dbReference>
<dbReference type="FunFam" id="1.25.10.10:FF:000146">
    <property type="entry name" value="putative MO25-like protein At5g47540"/>
    <property type="match status" value="1"/>
</dbReference>
<dbReference type="Gene3D" id="1.25.10.10">
    <property type="entry name" value="Leucine-rich Repeat Variant"/>
    <property type="match status" value="1"/>
</dbReference>
<dbReference type="InterPro" id="IPR011989">
    <property type="entry name" value="ARM-like"/>
</dbReference>
<dbReference type="InterPro" id="IPR016024">
    <property type="entry name" value="ARM-type_fold"/>
</dbReference>
<dbReference type="InterPro" id="IPR013878">
    <property type="entry name" value="Mo25"/>
</dbReference>
<dbReference type="PANTHER" id="PTHR10182">
    <property type="entry name" value="CALCIUM-BINDING PROTEIN 39-RELATED"/>
    <property type="match status" value="1"/>
</dbReference>
<dbReference type="PANTHER" id="PTHR10182:SF20">
    <property type="entry name" value="GENOME ASSEMBLY, CHROMOSOME: A09"/>
    <property type="match status" value="1"/>
</dbReference>
<dbReference type="Pfam" id="PF08569">
    <property type="entry name" value="Mo25"/>
    <property type="match status" value="1"/>
</dbReference>
<dbReference type="SUPFAM" id="SSF48371">
    <property type="entry name" value="ARM repeat"/>
    <property type="match status" value="1"/>
</dbReference>
<organism>
    <name type="scientific">Arabidopsis thaliana</name>
    <name type="common">Mouse-ear cress</name>
    <dbReference type="NCBI Taxonomy" id="3702"/>
    <lineage>
        <taxon>Eukaryota</taxon>
        <taxon>Viridiplantae</taxon>
        <taxon>Streptophyta</taxon>
        <taxon>Embryophyta</taxon>
        <taxon>Tracheophyta</taxon>
        <taxon>Spermatophyta</taxon>
        <taxon>Magnoliopsida</taxon>
        <taxon>eudicotyledons</taxon>
        <taxon>Gunneridae</taxon>
        <taxon>Pentapetalae</taxon>
        <taxon>rosids</taxon>
        <taxon>malvids</taxon>
        <taxon>Brassicales</taxon>
        <taxon>Brassicaceae</taxon>
        <taxon>Camelineae</taxon>
        <taxon>Arabidopsis</taxon>
    </lineage>
</organism>
<gene>
    <name type="ordered locus">At2g03410</name>
    <name type="ORF">T4M8.16</name>
</gene>
<accession>Q9ZQ77</accession>
<accession>Q67ZV9</accession>
<proteinExistence type="evidence at transcript level"/>
<comment type="similarity">
    <text evidence="1">Belongs to the Mo25 family.</text>
</comment>
<evidence type="ECO:0000305" key="1"/>